<protein>
    <recommendedName>
        <fullName evidence="1">Type III pantothenate kinase</fullName>
        <ecNumber evidence="1">2.7.1.33</ecNumber>
    </recommendedName>
    <alternativeName>
        <fullName evidence="1">PanK-III</fullName>
    </alternativeName>
    <alternativeName>
        <fullName evidence="1">Pantothenic acid kinase</fullName>
    </alternativeName>
</protein>
<keyword id="KW-0067">ATP-binding</keyword>
<keyword id="KW-0173">Coenzyme A biosynthesis</keyword>
<keyword id="KW-0963">Cytoplasm</keyword>
<keyword id="KW-0418">Kinase</keyword>
<keyword id="KW-0479">Metal-binding</keyword>
<keyword id="KW-0547">Nucleotide-binding</keyword>
<keyword id="KW-0630">Potassium</keyword>
<keyword id="KW-1185">Reference proteome</keyword>
<keyword id="KW-0808">Transferase</keyword>
<proteinExistence type="inferred from homology"/>
<evidence type="ECO:0000255" key="1">
    <source>
        <dbReference type="HAMAP-Rule" id="MF_01274"/>
    </source>
</evidence>
<comment type="function">
    <text evidence="1">Catalyzes the phosphorylation of pantothenate (Pan), the first step in CoA biosynthesis.</text>
</comment>
<comment type="catalytic activity">
    <reaction evidence="1">
        <text>(R)-pantothenate + ATP = (R)-4'-phosphopantothenate + ADP + H(+)</text>
        <dbReference type="Rhea" id="RHEA:16373"/>
        <dbReference type="ChEBI" id="CHEBI:10986"/>
        <dbReference type="ChEBI" id="CHEBI:15378"/>
        <dbReference type="ChEBI" id="CHEBI:29032"/>
        <dbReference type="ChEBI" id="CHEBI:30616"/>
        <dbReference type="ChEBI" id="CHEBI:456216"/>
        <dbReference type="EC" id="2.7.1.33"/>
    </reaction>
</comment>
<comment type="cofactor">
    <cofactor evidence="1">
        <name>NH4(+)</name>
        <dbReference type="ChEBI" id="CHEBI:28938"/>
    </cofactor>
    <cofactor evidence="1">
        <name>K(+)</name>
        <dbReference type="ChEBI" id="CHEBI:29103"/>
    </cofactor>
    <text evidence="1">A monovalent cation. Ammonium or potassium.</text>
</comment>
<comment type="pathway">
    <text evidence="1">Cofactor biosynthesis; coenzyme A biosynthesis; CoA from (R)-pantothenate: step 1/5.</text>
</comment>
<comment type="subunit">
    <text evidence="1">Homodimer.</text>
</comment>
<comment type="subcellular location">
    <subcellularLocation>
        <location evidence="1">Cytoplasm</location>
    </subcellularLocation>
</comment>
<comment type="similarity">
    <text evidence="1">Belongs to the type III pantothenate kinase family.</text>
</comment>
<gene>
    <name evidence="1" type="primary">coaX</name>
    <name type="ordered locus">BL1162</name>
</gene>
<reference key="1">
    <citation type="journal article" date="2002" name="Proc. Natl. Acad. Sci. U.S.A.">
        <title>The genome sequence of Bifidobacterium longum reflects its adaptation to the human gastrointestinal tract.</title>
        <authorList>
            <person name="Schell M.A."/>
            <person name="Karmirantzou M."/>
            <person name="Snel B."/>
            <person name="Vilanova D."/>
            <person name="Berger B."/>
            <person name="Pessi G."/>
            <person name="Zwahlen M.-C."/>
            <person name="Desiere F."/>
            <person name="Bork P."/>
            <person name="Delley M."/>
            <person name="Pridmore R.D."/>
            <person name="Arigoni F."/>
        </authorList>
    </citation>
    <scope>NUCLEOTIDE SEQUENCE [LARGE SCALE GENOMIC DNA]</scope>
    <source>
        <strain>NCC 2705</strain>
    </source>
</reference>
<feature type="chain" id="PRO_0000267500" description="Type III pantothenate kinase">
    <location>
        <begin position="1"/>
        <end position="256"/>
    </location>
</feature>
<feature type="active site" description="Proton acceptor" evidence="1">
    <location>
        <position position="109"/>
    </location>
</feature>
<feature type="binding site" evidence="1">
    <location>
        <begin position="6"/>
        <end position="13"/>
    </location>
    <ligand>
        <name>ATP</name>
        <dbReference type="ChEBI" id="CHEBI:30616"/>
    </ligand>
</feature>
<feature type="binding site" evidence="1">
    <location>
        <begin position="107"/>
        <end position="110"/>
    </location>
    <ligand>
        <name>substrate</name>
    </ligand>
</feature>
<feature type="binding site" evidence="1">
    <location>
        <position position="129"/>
    </location>
    <ligand>
        <name>K(+)</name>
        <dbReference type="ChEBI" id="CHEBI:29103"/>
    </ligand>
</feature>
<feature type="binding site" evidence="1">
    <location>
        <position position="132"/>
    </location>
    <ligand>
        <name>ATP</name>
        <dbReference type="ChEBI" id="CHEBI:30616"/>
    </ligand>
</feature>
<feature type="binding site" evidence="1">
    <location>
        <position position="184"/>
    </location>
    <ligand>
        <name>substrate</name>
    </ligand>
</feature>
<sequence length="256" mass="27668">MLVAVDIGNTNIVLGFLDGDAIAGTYRITTKANHTSDEYGLFLTEFLRMSGFQPSDVDDVIICSVVPKVMHSFRSSIVKFLDIDPMVVGPGIKTGMNVRVDDPKSLGADILADCAGAYYEYGGPVLVADFGTATTFTHVSDKGVVDSGVITTGIRAGAAALWGDTAQLPEVEITRPDTILGTNTKTCMQAGLYYTFLGGVERTIRQFRRELGGEDFKVITTGGLGRVFENDTELIDVYDPDLIFKGMAHIYSRNVK</sequence>
<name>COAX_BIFLO</name>
<organism>
    <name type="scientific">Bifidobacterium longum (strain NCC 2705)</name>
    <dbReference type="NCBI Taxonomy" id="206672"/>
    <lineage>
        <taxon>Bacteria</taxon>
        <taxon>Bacillati</taxon>
        <taxon>Actinomycetota</taxon>
        <taxon>Actinomycetes</taxon>
        <taxon>Bifidobacteriales</taxon>
        <taxon>Bifidobacteriaceae</taxon>
        <taxon>Bifidobacterium</taxon>
    </lineage>
</organism>
<dbReference type="EC" id="2.7.1.33" evidence="1"/>
<dbReference type="EMBL" id="AE014295">
    <property type="protein sequence ID" value="AAN24967.1"/>
    <property type="molecule type" value="Genomic_DNA"/>
</dbReference>
<dbReference type="RefSeq" id="NP_696331.1">
    <property type="nucleotide sequence ID" value="NC_004307.2"/>
</dbReference>
<dbReference type="RefSeq" id="WP_008783138.1">
    <property type="nucleotide sequence ID" value="NC_004307.2"/>
</dbReference>
<dbReference type="SMR" id="Q8G558"/>
<dbReference type="STRING" id="206672.BL1162"/>
<dbReference type="EnsemblBacteria" id="AAN24967">
    <property type="protein sequence ID" value="AAN24967"/>
    <property type="gene ID" value="BL1162"/>
</dbReference>
<dbReference type="KEGG" id="blo:BL1162"/>
<dbReference type="PATRIC" id="fig|206672.9.peg.872"/>
<dbReference type="HOGENOM" id="CLU_066627_1_0_11"/>
<dbReference type="OrthoDB" id="9804707at2"/>
<dbReference type="PhylomeDB" id="Q8G558"/>
<dbReference type="UniPathway" id="UPA00241">
    <property type="reaction ID" value="UER00352"/>
</dbReference>
<dbReference type="Proteomes" id="UP000000439">
    <property type="component" value="Chromosome"/>
</dbReference>
<dbReference type="GO" id="GO:0005737">
    <property type="term" value="C:cytoplasm"/>
    <property type="evidence" value="ECO:0007669"/>
    <property type="project" value="UniProtKB-SubCell"/>
</dbReference>
<dbReference type="GO" id="GO:0005524">
    <property type="term" value="F:ATP binding"/>
    <property type="evidence" value="ECO:0007669"/>
    <property type="project" value="UniProtKB-UniRule"/>
</dbReference>
<dbReference type="GO" id="GO:0046872">
    <property type="term" value="F:metal ion binding"/>
    <property type="evidence" value="ECO:0007669"/>
    <property type="project" value="UniProtKB-KW"/>
</dbReference>
<dbReference type="GO" id="GO:0004594">
    <property type="term" value="F:pantothenate kinase activity"/>
    <property type="evidence" value="ECO:0007669"/>
    <property type="project" value="UniProtKB-UniRule"/>
</dbReference>
<dbReference type="GO" id="GO:0015937">
    <property type="term" value="P:coenzyme A biosynthetic process"/>
    <property type="evidence" value="ECO:0007669"/>
    <property type="project" value="UniProtKB-UniRule"/>
</dbReference>
<dbReference type="CDD" id="cd24015">
    <property type="entry name" value="ASKHA_NBD_PanK-III"/>
    <property type="match status" value="1"/>
</dbReference>
<dbReference type="Gene3D" id="3.30.420.40">
    <property type="match status" value="2"/>
</dbReference>
<dbReference type="HAMAP" id="MF_01274">
    <property type="entry name" value="Pantothen_kinase_3"/>
    <property type="match status" value="1"/>
</dbReference>
<dbReference type="InterPro" id="IPR043129">
    <property type="entry name" value="ATPase_NBD"/>
</dbReference>
<dbReference type="InterPro" id="IPR004619">
    <property type="entry name" value="Type_III_PanK"/>
</dbReference>
<dbReference type="NCBIfam" id="TIGR00671">
    <property type="entry name" value="baf"/>
    <property type="match status" value="1"/>
</dbReference>
<dbReference type="NCBIfam" id="NF009846">
    <property type="entry name" value="PRK13318.1-4"/>
    <property type="match status" value="1"/>
</dbReference>
<dbReference type="NCBIfam" id="NF009855">
    <property type="entry name" value="PRK13321.1"/>
    <property type="match status" value="1"/>
</dbReference>
<dbReference type="PANTHER" id="PTHR34265">
    <property type="entry name" value="TYPE III PANTOTHENATE KINASE"/>
    <property type="match status" value="1"/>
</dbReference>
<dbReference type="PANTHER" id="PTHR34265:SF1">
    <property type="entry name" value="TYPE III PANTOTHENATE KINASE"/>
    <property type="match status" value="1"/>
</dbReference>
<dbReference type="Pfam" id="PF03309">
    <property type="entry name" value="Pan_kinase"/>
    <property type="match status" value="1"/>
</dbReference>
<dbReference type="SUPFAM" id="SSF53067">
    <property type="entry name" value="Actin-like ATPase domain"/>
    <property type="match status" value="2"/>
</dbReference>
<accession>Q8G558</accession>